<dbReference type="EMBL" id="U00039">
    <property type="protein sequence ID" value="AAB18496.1"/>
    <property type="molecule type" value="Genomic_DNA"/>
</dbReference>
<dbReference type="EMBL" id="U00096">
    <property type="protein sequence ID" value="AAC76545.1"/>
    <property type="molecule type" value="Genomic_DNA"/>
</dbReference>
<dbReference type="EMBL" id="AP009048">
    <property type="protein sequence ID" value="BAE77774.1"/>
    <property type="molecule type" value="Genomic_DNA"/>
</dbReference>
<dbReference type="PIR" id="S47740">
    <property type="entry name" value="S47740"/>
</dbReference>
<dbReference type="RefSeq" id="NP_417977.1">
    <property type="nucleotide sequence ID" value="NC_000913.3"/>
</dbReference>
<dbReference type="RefSeq" id="WP_001167676.1">
    <property type="nucleotide sequence ID" value="NZ_STEB01000018.1"/>
</dbReference>
<dbReference type="SMR" id="P37640"/>
<dbReference type="BioGRID" id="4262526">
    <property type="interactions" value="97"/>
</dbReference>
<dbReference type="BioGRID" id="852344">
    <property type="interactions" value="3"/>
</dbReference>
<dbReference type="DIP" id="DIP-12377N"/>
<dbReference type="FunCoup" id="P37640">
    <property type="interactions" value="101"/>
</dbReference>
<dbReference type="IntAct" id="P37640">
    <property type="interactions" value="9"/>
</dbReference>
<dbReference type="STRING" id="511145.b3520"/>
<dbReference type="PaxDb" id="511145-b3520"/>
<dbReference type="EnsemblBacteria" id="AAC76545">
    <property type="protein sequence ID" value="AAC76545"/>
    <property type="gene ID" value="b3520"/>
</dbReference>
<dbReference type="GeneID" id="948036"/>
<dbReference type="KEGG" id="ecj:JW3488"/>
<dbReference type="KEGG" id="eco:b3520"/>
<dbReference type="KEGG" id="ecoc:C3026_19070"/>
<dbReference type="PATRIC" id="fig|1411691.4.peg.3198"/>
<dbReference type="EchoBASE" id="EB2157"/>
<dbReference type="eggNOG" id="COG2197">
    <property type="taxonomic scope" value="Bacteria"/>
</dbReference>
<dbReference type="HOGENOM" id="CLU_000445_90_8_6"/>
<dbReference type="InParanoid" id="P37640"/>
<dbReference type="OMA" id="FIDTHYT"/>
<dbReference type="OrthoDB" id="8874570at2"/>
<dbReference type="PhylomeDB" id="P37640"/>
<dbReference type="BioCyc" id="EcoCyc:EG12246-MONOMER"/>
<dbReference type="PRO" id="PR:P37640"/>
<dbReference type="Proteomes" id="UP000000625">
    <property type="component" value="Chromosome"/>
</dbReference>
<dbReference type="GO" id="GO:0003677">
    <property type="term" value="F:DNA binding"/>
    <property type="evidence" value="ECO:0007669"/>
    <property type="project" value="UniProtKB-KW"/>
</dbReference>
<dbReference type="GO" id="GO:0006355">
    <property type="term" value="P:regulation of DNA-templated transcription"/>
    <property type="evidence" value="ECO:0007669"/>
    <property type="project" value="InterPro"/>
</dbReference>
<dbReference type="CDD" id="cd06170">
    <property type="entry name" value="LuxR_C_like"/>
    <property type="match status" value="1"/>
</dbReference>
<dbReference type="Gene3D" id="3.40.50.2300">
    <property type="match status" value="1"/>
</dbReference>
<dbReference type="InterPro" id="IPR051015">
    <property type="entry name" value="RcsB_transcriptional_reg"/>
</dbReference>
<dbReference type="InterPro" id="IPR016032">
    <property type="entry name" value="Sig_transdc_resp-reg_C-effctor"/>
</dbReference>
<dbReference type="InterPro" id="IPR000792">
    <property type="entry name" value="Tscrpt_reg_LuxR_C"/>
</dbReference>
<dbReference type="PANTHER" id="PTHR45566">
    <property type="entry name" value="HTH-TYPE TRANSCRIPTIONAL REGULATOR YHJB-RELATED"/>
    <property type="match status" value="1"/>
</dbReference>
<dbReference type="PANTHER" id="PTHR45566:SF1">
    <property type="entry name" value="HTH-TYPE TRANSCRIPTIONAL REGULATOR YHJB-RELATED"/>
    <property type="match status" value="1"/>
</dbReference>
<dbReference type="Pfam" id="PF00196">
    <property type="entry name" value="GerE"/>
    <property type="match status" value="1"/>
</dbReference>
<dbReference type="PRINTS" id="PR00038">
    <property type="entry name" value="HTHLUXR"/>
</dbReference>
<dbReference type="SMART" id="SM00421">
    <property type="entry name" value="HTH_LUXR"/>
    <property type="match status" value="1"/>
</dbReference>
<dbReference type="SUPFAM" id="SSF46894">
    <property type="entry name" value="C-terminal effector domain of the bipartite response regulators"/>
    <property type="match status" value="1"/>
</dbReference>
<dbReference type="PROSITE" id="PS00622">
    <property type="entry name" value="HTH_LUXR_1"/>
    <property type="match status" value="1"/>
</dbReference>
<dbReference type="PROSITE" id="PS50043">
    <property type="entry name" value="HTH_LUXR_2"/>
    <property type="match status" value="1"/>
</dbReference>
<gene>
    <name type="primary">yhjB</name>
    <name type="ordered locus">b3520</name>
    <name type="ordered locus">JW3488</name>
</gene>
<proteinExistence type="evidence at protein level"/>
<keyword id="KW-0238">DNA-binding</keyword>
<keyword id="KW-1185">Reference proteome</keyword>
<keyword id="KW-0804">Transcription</keyword>
<keyword id="KW-0805">Transcription regulation</keyword>
<comment type="interaction">
    <interactant intactId="EBI-542016">
        <id>P37640</id>
    </interactant>
    <interactant intactId="EBI-543750">
        <id>P0A6F5</id>
        <label>groEL</label>
    </interactant>
    <organismsDiffer>false</organismsDiffer>
    <experiments>3</experiments>
</comment>
<accession>P37640</accession>
<accession>Q2M7I2</accession>
<evidence type="ECO:0000255" key="1">
    <source>
        <dbReference type="PROSITE-ProRule" id="PRU00411"/>
    </source>
</evidence>
<sequence length="200" mass="22604">MQIVMFDRQSIFIHGMKISLQQRIPGVSIQGASQADELWQKLESYPEALVMLDGDQDGEFCYWLLQKTVVQFPEVKVLITATDCNKRWLQEVIHFNVLAIVPRDSTVETFALAVNSAAMGMMFLPGDWRTTPEKDIKDLKSLSARQREILTMLAAGESNKEIGRALNISTGTVKAHLESLYRRLEVKNRTQAAMMLNISS</sequence>
<name>YHJB_ECOLI</name>
<reference key="1">
    <citation type="journal article" date="1994" name="Nucleic Acids Res.">
        <title>Analysis of the Escherichia coli genome. V. DNA sequence of the region from 76.0 to 81.5 minutes.</title>
        <authorList>
            <person name="Sofia H.J."/>
            <person name="Burland V."/>
            <person name="Daniels D.L."/>
            <person name="Plunkett G. III"/>
            <person name="Blattner F.R."/>
        </authorList>
    </citation>
    <scope>NUCLEOTIDE SEQUENCE [LARGE SCALE GENOMIC DNA]</scope>
    <source>
        <strain>K12 / MG1655 / ATCC 47076</strain>
    </source>
</reference>
<reference key="2">
    <citation type="journal article" date="1997" name="Science">
        <title>The complete genome sequence of Escherichia coli K-12.</title>
        <authorList>
            <person name="Blattner F.R."/>
            <person name="Plunkett G. III"/>
            <person name="Bloch C.A."/>
            <person name="Perna N.T."/>
            <person name="Burland V."/>
            <person name="Riley M."/>
            <person name="Collado-Vides J."/>
            <person name="Glasner J.D."/>
            <person name="Rode C.K."/>
            <person name="Mayhew G.F."/>
            <person name="Gregor J."/>
            <person name="Davis N.W."/>
            <person name="Kirkpatrick H.A."/>
            <person name="Goeden M.A."/>
            <person name="Rose D.J."/>
            <person name="Mau B."/>
            <person name="Shao Y."/>
        </authorList>
    </citation>
    <scope>NUCLEOTIDE SEQUENCE [LARGE SCALE GENOMIC DNA]</scope>
    <source>
        <strain>K12 / MG1655 / ATCC 47076</strain>
    </source>
</reference>
<reference key="3">
    <citation type="journal article" date="2006" name="Mol. Syst. Biol.">
        <title>Highly accurate genome sequences of Escherichia coli K-12 strains MG1655 and W3110.</title>
        <authorList>
            <person name="Hayashi K."/>
            <person name="Morooka N."/>
            <person name="Yamamoto Y."/>
            <person name="Fujita K."/>
            <person name="Isono K."/>
            <person name="Choi S."/>
            <person name="Ohtsubo E."/>
            <person name="Baba T."/>
            <person name="Wanner B.L."/>
            <person name="Mori H."/>
            <person name="Horiuchi T."/>
        </authorList>
    </citation>
    <scope>NUCLEOTIDE SEQUENCE [LARGE SCALE GENOMIC DNA]</scope>
    <source>
        <strain>K12 / W3110 / ATCC 27325 / DSM 5911</strain>
    </source>
</reference>
<protein>
    <recommendedName>
        <fullName>Putative HTH-type transcriptional regulator YhjB</fullName>
    </recommendedName>
</protein>
<organism>
    <name type="scientific">Escherichia coli (strain K12)</name>
    <dbReference type="NCBI Taxonomy" id="83333"/>
    <lineage>
        <taxon>Bacteria</taxon>
        <taxon>Pseudomonadati</taxon>
        <taxon>Pseudomonadota</taxon>
        <taxon>Gammaproteobacteria</taxon>
        <taxon>Enterobacterales</taxon>
        <taxon>Enterobacteriaceae</taxon>
        <taxon>Escherichia</taxon>
    </lineage>
</organism>
<feature type="chain" id="PRO_0000184198" description="Putative HTH-type transcriptional regulator YhjB">
    <location>
        <begin position="1"/>
        <end position="200"/>
    </location>
</feature>
<feature type="domain" description="HTH luxR-type" evidence="1">
    <location>
        <begin position="135"/>
        <end position="200"/>
    </location>
</feature>
<feature type="DNA-binding region" description="H-T-H motif" evidence="1">
    <location>
        <begin position="159"/>
        <end position="178"/>
    </location>
</feature>